<gene>
    <name evidence="1" type="primary">rimP</name>
    <name type="ordered locus">RSc1287</name>
    <name type="ORF">RS02964</name>
</gene>
<accession>Q8XZV8</accession>
<organism>
    <name type="scientific">Ralstonia nicotianae (strain ATCC BAA-1114 / GMI1000)</name>
    <name type="common">Ralstonia solanacearum</name>
    <dbReference type="NCBI Taxonomy" id="267608"/>
    <lineage>
        <taxon>Bacteria</taxon>
        <taxon>Pseudomonadati</taxon>
        <taxon>Pseudomonadota</taxon>
        <taxon>Betaproteobacteria</taxon>
        <taxon>Burkholderiales</taxon>
        <taxon>Burkholderiaceae</taxon>
        <taxon>Ralstonia</taxon>
        <taxon>Ralstonia solanacearum species complex</taxon>
    </lineage>
</organism>
<evidence type="ECO:0000255" key="1">
    <source>
        <dbReference type="HAMAP-Rule" id="MF_01077"/>
    </source>
</evidence>
<dbReference type="EMBL" id="AL646052">
    <property type="protein sequence ID" value="CAD14989.1"/>
    <property type="molecule type" value="Genomic_DNA"/>
</dbReference>
<dbReference type="RefSeq" id="WP_011001236.1">
    <property type="nucleotide sequence ID" value="NC_003295.1"/>
</dbReference>
<dbReference type="SMR" id="Q8XZV8"/>
<dbReference type="STRING" id="267608.RSc1287"/>
<dbReference type="EnsemblBacteria" id="CAD14989">
    <property type="protein sequence ID" value="CAD14989"/>
    <property type="gene ID" value="RSc1287"/>
</dbReference>
<dbReference type="KEGG" id="rso:RSc1287"/>
<dbReference type="eggNOG" id="COG0779">
    <property type="taxonomic scope" value="Bacteria"/>
</dbReference>
<dbReference type="HOGENOM" id="CLU_070525_1_0_4"/>
<dbReference type="Proteomes" id="UP000001436">
    <property type="component" value="Chromosome"/>
</dbReference>
<dbReference type="GO" id="GO:0005829">
    <property type="term" value="C:cytosol"/>
    <property type="evidence" value="ECO:0007669"/>
    <property type="project" value="TreeGrafter"/>
</dbReference>
<dbReference type="GO" id="GO:0000028">
    <property type="term" value="P:ribosomal small subunit assembly"/>
    <property type="evidence" value="ECO:0007669"/>
    <property type="project" value="TreeGrafter"/>
</dbReference>
<dbReference type="GO" id="GO:0006412">
    <property type="term" value="P:translation"/>
    <property type="evidence" value="ECO:0007669"/>
    <property type="project" value="TreeGrafter"/>
</dbReference>
<dbReference type="CDD" id="cd01734">
    <property type="entry name" value="YlxS_C"/>
    <property type="match status" value="1"/>
</dbReference>
<dbReference type="Gene3D" id="2.30.30.180">
    <property type="entry name" value="Ribosome maturation factor RimP, C-terminal domain"/>
    <property type="match status" value="1"/>
</dbReference>
<dbReference type="Gene3D" id="3.30.300.70">
    <property type="entry name" value="RimP-like superfamily, N-terminal"/>
    <property type="match status" value="1"/>
</dbReference>
<dbReference type="HAMAP" id="MF_01077">
    <property type="entry name" value="RimP"/>
    <property type="match status" value="1"/>
</dbReference>
<dbReference type="InterPro" id="IPR003728">
    <property type="entry name" value="Ribosome_maturation_RimP"/>
</dbReference>
<dbReference type="InterPro" id="IPR028998">
    <property type="entry name" value="RimP_C"/>
</dbReference>
<dbReference type="InterPro" id="IPR036847">
    <property type="entry name" value="RimP_C_sf"/>
</dbReference>
<dbReference type="InterPro" id="IPR028989">
    <property type="entry name" value="RimP_N"/>
</dbReference>
<dbReference type="InterPro" id="IPR035956">
    <property type="entry name" value="RimP_N_sf"/>
</dbReference>
<dbReference type="NCBIfam" id="NF000929">
    <property type="entry name" value="PRK00092.2-1"/>
    <property type="match status" value="1"/>
</dbReference>
<dbReference type="PANTHER" id="PTHR33867">
    <property type="entry name" value="RIBOSOME MATURATION FACTOR RIMP"/>
    <property type="match status" value="1"/>
</dbReference>
<dbReference type="PANTHER" id="PTHR33867:SF1">
    <property type="entry name" value="RIBOSOME MATURATION FACTOR RIMP"/>
    <property type="match status" value="1"/>
</dbReference>
<dbReference type="Pfam" id="PF17384">
    <property type="entry name" value="DUF150_C"/>
    <property type="match status" value="1"/>
</dbReference>
<dbReference type="Pfam" id="PF02576">
    <property type="entry name" value="RimP_N"/>
    <property type="match status" value="1"/>
</dbReference>
<dbReference type="SUPFAM" id="SSF74942">
    <property type="entry name" value="YhbC-like, C-terminal domain"/>
    <property type="match status" value="1"/>
</dbReference>
<dbReference type="SUPFAM" id="SSF75420">
    <property type="entry name" value="YhbC-like, N-terminal domain"/>
    <property type="match status" value="1"/>
</dbReference>
<sequence>MHLTDLIEKTLTAMGYELVEVERAPAGLLRVYIDQAETGIVIEDCEKVSHQLTRVFEVENVNYERLEVSSPGLDRPLRTLVDFARFAGLEAKVTLRLPVNGQKNFTGIVQAPAGEPGQERIGLEFEGKDGPALLEFTLSELDRARLVPVLDFKGNRNKGNKQ</sequence>
<reference key="1">
    <citation type="journal article" date="2002" name="Nature">
        <title>Genome sequence of the plant pathogen Ralstonia solanacearum.</title>
        <authorList>
            <person name="Salanoubat M."/>
            <person name="Genin S."/>
            <person name="Artiguenave F."/>
            <person name="Gouzy J."/>
            <person name="Mangenot S."/>
            <person name="Arlat M."/>
            <person name="Billault A."/>
            <person name="Brottier P."/>
            <person name="Camus J.-C."/>
            <person name="Cattolico L."/>
            <person name="Chandler M."/>
            <person name="Choisne N."/>
            <person name="Claudel-Renard C."/>
            <person name="Cunnac S."/>
            <person name="Demange N."/>
            <person name="Gaspin C."/>
            <person name="Lavie M."/>
            <person name="Moisan A."/>
            <person name="Robert C."/>
            <person name="Saurin W."/>
            <person name="Schiex T."/>
            <person name="Siguier P."/>
            <person name="Thebault P."/>
            <person name="Whalen M."/>
            <person name="Wincker P."/>
            <person name="Levy M."/>
            <person name="Weissenbach J."/>
            <person name="Boucher C.A."/>
        </authorList>
    </citation>
    <scope>NUCLEOTIDE SEQUENCE [LARGE SCALE GENOMIC DNA]</scope>
    <source>
        <strain>ATCC BAA-1114 / GMI1000</strain>
    </source>
</reference>
<feature type="chain" id="PRO_0000181909" description="Ribosome maturation factor RimP">
    <location>
        <begin position="1"/>
        <end position="162"/>
    </location>
</feature>
<proteinExistence type="inferred from homology"/>
<name>RIMP_RALN1</name>
<comment type="function">
    <text evidence="1">Required for maturation of 30S ribosomal subunits.</text>
</comment>
<comment type="subcellular location">
    <subcellularLocation>
        <location evidence="1">Cytoplasm</location>
    </subcellularLocation>
</comment>
<comment type="similarity">
    <text evidence="1">Belongs to the RimP family.</text>
</comment>
<keyword id="KW-0963">Cytoplasm</keyword>
<keyword id="KW-1185">Reference proteome</keyword>
<keyword id="KW-0690">Ribosome biogenesis</keyword>
<protein>
    <recommendedName>
        <fullName evidence="1">Ribosome maturation factor RimP</fullName>
    </recommendedName>
</protein>